<gene>
    <name evidence="1" type="primary">adk</name>
    <name type="ordered locus">Cpar_1126</name>
</gene>
<protein>
    <recommendedName>
        <fullName evidence="1">Adenylate kinase</fullName>
        <shortName evidence="1">AK</shortName>
        <ecNumber evidence="1">2.7.4.3</ecNumber>
    </recommendedName>
    <alternativeName>
        <fullName evidence="1">ATP-AMP transphosphorylase</fullName>
    </alternativeName>
    <alternativeName>
        <fullName evidence="1">ATP:AMP phosphotransferase</fullName>
    </alternativeName>
    <alternativeName>
        <fullName evidence="1">Adenylate monophosphate kinase</fullName>
    </alternativeName>
</protein>
<organism>
    <name type="scientific">Chlorobaculum parvum (strain DSM 263 / NCIMB 8327)</name>
    <name type="common">Chlorobium vibrioforme subsp. thiosulfatophilum</name>
    <dbReference type="NCBI Taxonomy" id="517417"/>
    <lineage>
        <taxon>Bacteria</taxon>
        <taxon>Pseudomonadati</taxon>
        <taxon>Chlorobiota</taxon>
        <taxon>Chlorobiia</taxon>
        <taxon>Chlorobiales</taxon>
        <taxon>Chlorobiaceae</taxon>
        <taxon>Chlorobaculum</taxon>
    </lineage>
</organism>
<dbReference type="EC" id="2.7.4.3" evidence="1"/>
<dbReference type="EMBL" id="CP001099">
    <property type="protein sequence ID" value="ACF11533.1"/>
    <property type="molecule type" value="Genomic_DNA"/>
</dbReference>
<dbReference type="RefSeq" id="WP_012502366.1">
    <property type="nucleotide sequence ID" value="NC_011027.1"/>
</dbReference>
<dbReference type="SMR" id="B3QNN0"/>
<dbReference type="STRING" id="517417.Cpar_1126"/>
<dbReference type="KEGG" id="cpc:Cpar_1126"/>
<dbReference type="eggNOG" id="COG0563">
    <property type="taxonomic scope" value="Bacteria"/>
</dbReference>
<dbReference type="HOGENOM" id="CLU_032354_1_2_10"/>
<dbReference type="OrthoDB" id="9805030at2"/>
<dbReference type="UniPathway" id="UPA00588">
    <property type="reaction ID" value="UER00649"/>
</dbReference>
<dbReference type="Proteomes" id="UP000008811">
    <property type="component" value="Chromosome"/>
</dbReference>
<dbReference type="GO" id="GO:0005737">
    <property type="term" value="C:cytoplasm"/>
    <property type="evidence" value="ECO:0007669"/>
    <property type="project" value="UniProtKB-SubCell"/>
</dbReference>
<dbReference type="GO" id="GO:0004017">
    <property type="term" value="F:adenylate kinase activity"/>
    <property type="evidence" value="ECO:0007669"/>
    <property type="project" value="UniProtKB-UniRule"/>
</dbReference>
<dbReference type="GO" id="GO:0005524">
    <property type="term" value="F:ATP binding"/>
    <property type="evidence" value="ECO:0007669"/>
    <property type="project" value="UniProtKB-UniRule"/>
</dbReference>
<dbReference type="GO" id="GO:0044209">
    <property type="term" value="P:AMP salvage"/>
    <property type="evidence" value="ECO:0007669"/>
    <property type="project" value="UniProtKB-UniRule"/>
</dbReference>
<dbReference type="CDD" id="cd01428">
    <property type="entry name" value="ADK"/>
    <property type="match status" value="1"/>
</dbReference>
<dbReference type="FunFam" id="3.40.50.300:FF:000106">
    <property type="entry name" value="Adenylate kinase mitochondrial"/>
    <property type="match status" value="1"/>
</dbReference>
<dbReference type="Gene3D" id="3.40.50.300">
    <property type="entry name" value="P-loop containing nucleotide triphosphate hydrolases"/>
    <property type="match status" value="1"/>
</dbReference>
<dbReference type="HAMAP" id="MF_00235">
    <property type="entry name" value="Adenylate_kinase_Adk"/>
    <property type="match status" value="1"/>
</dbReference>
<dbReference type="InterPro" id="IPR006259">
    <property type="entry name" value="Adenyl_kin_sub"/>
</dbReference>
<dbReference type="InterPro" id="IPR000850">
    <property type="entry name" value="Adenylat/UMP-CMP_kin"/>
</dbReference>
<dbReference type="InterPro" id="IPR033690">
    <property type="entry name" value="Adenylat_kinase_CS"/>
</dbReference>
<dbReference type="InterPro" id="IPR007862">
    <property type="entry name" value="Adenylate_kinase_lid-dom"/>
</dbReference>
<dbReference type="InterPro" id="IPR027417">
    <property type="entry name" value="P-loop_NTPase"/>
</dbReference>
<dbReference type="NCBIfam" id="TIGR01351">
    <property type="entry name" value="adk"/>
    <property type="match status" value="1"/>
</dbReference>
<dbReference type="NCBIfam" id="NF001379">
    <property type="entry name" value="PRK00279.1-1"/>
    <property type="match status" value="1"/>
</dbReference>
<dbReference type="NCBIfam" id="NF001380">
    <property type="entry name" value="PRK00279.1-2"/>
    <property type="match status" value="1"/>
</dbReference>
<dbReference type="NCBIfam" id="NF001381">
    <property type="entry name" value="PRK00279.1-3"/>
    <property type="match status" value="1"/>
</dbReference>
<dbReference type="NCBIfam" id="NF011100">
    <property type="entry name" value="PRK14527.1"/>
    <property type="match status" value="1"/>
</dbReference>
<dbReference type="PANTHER" id="PTHR23359">
    <property type="entry name" value="NUCLEOTIDE KINASE"/>
    <property type="match status" value="1"/>
</dbReference>
<dbReference type="Pfam" id="PF00406">
    <property type="entry name" value="ADK"/>
    <property type="match status" value="1"/>
</dbReference>
<dbReference type="Pfam" id="PF05191">
    <property type="entry name" value="ADK_lid"/>
    <property type="match status" value="1"/>
</dbReference>
<dbReference type="PRINTS" id="PR00094">
    <property type="entry name" value="ADENYLTKNASE"/>
</dbReference>
<dbReference type="SUPFAM" id="SSF52540">
    <property type="entry name" value="P-loop containing nucleoside triphosphate hydrolases"/>
    <property type="match status" value="1"/>
</dbReference>
<dbReference type="PROSITE" id="PS00113">
    <property type="entry name" value="ADENYLATE_KINASE"/>
    <property type="match status" value="1"/>
</dbReference>
<name>KAD_CHLP8</name>
<keyword id="KW-0067">ATP-binding</keyword>
<keyword id="KW-0963">Cytoplasm</keyword>
<keyword id="KW-0418">Kinase</keyword>
<keyword id="KW-0545">Nucleotide biosynthesis</keyword>
<keyword id="KW-0547">Nucleotide-binding</keyword>
<keyword id="KW-0808">Transferase</keyword>
<reference key="1">
    <citation type="submission" date="2008-06" db="EMBL/GenBank/DDBJ databases">
        <title>Complete sequence of Chlorobaculum parvum NCIB 8327.</title>
        <authorList>
            <consortium name="US DOE Joint Genome Institute"/>
            <person name="Lucas S."/>
            <person name="Copeland A."/>
            <person name="Lapidus A."/>
            <person name="Glavina del Rio T."/>
            <person name="Dalin E."/>
            <person name="Tice H."/>
            <person name="Bruce D."/>
            <person name="Goodwin L."/>
            <person name="Pitluck S."/>
            <person name="Schmutz J."/>
            <person name="Larimer F."/>
            <person name="Land M."/>
            <person name="Hauser L."/>
            <person name="Kyrpides N."/>
            <person name="Mikhailova N."/>
            <person name="Zhao F."/>
            <person name="Li T."/>
            <person name="Liu Z."/>
            <person name="Overmann J."/>
            <person name="Bryant D.A."/>
            <person name="Richardson P."/>
        </authorList>
    </citation>
    <scope>NUCLEOTIDE SEQUENCE [LARGE SCALE GENOMIC DNA]</scope>
    <source>
        <strain>DSM 263 / NCIMB 8327</strain>
    </source>
</reference>
<comment type="function">
    <text evidence="1">Catalyzes the reversible transfer of the terminal phosphate group between ATP and AMP. Plays an important role in cellular energy homeostasis and in adenine nucleotide metabolism.</text>
</comment>
<comment type="catalytic activity">
    <reaction evidence="1">
        <text>AMP + ATP = 2 ADP</text>
        <dbReference type="Rhea" id="RHEA:12973"/>
        <dbReference type="ChEBI" id="CHEBI:30616"/>
        <dbReference type="ChEBI" id="CHEBI:456215"/>
        <dbReference type="ChEBI" id="CHEBI:456216"/>
        <dbReference type="EC" id="2.7.4.3"/>
    </reaction>
</comment>
<comment type="pathway">
    <text evidence="1">Purine metabolism; AMP biosynthesis via salvage pathway; AMP from ADP: step 1/1.</text>
</comment>
<comment type="subunit">
    <text evidence="1">Monomer.</text>
</comment>
<comment type="subcellular location">
    <subcellularLocation>
        <location evidence="1">Cytoplasm</location>
    </subcellularLocation>
</comment>
<comment type="domain">
    <text evidence="1">Consists of three domains, a large central CORE domain and two small peripheral domains, NMPbind and LID, which undergo movements during catalysis. The LID domain closes over the site of phosphoryl transfer upon ATP binding. Assembling and dissambling the active center during each catalytic cycle provides an effective means to prevent ATP hydrolysis.</text>
</comment>
<comment type="similarity">
    <text evidence="1">Belongs to the adenylate kinase family.</text>
</comment>
<sequence>MRVILLGAPGAGKGTQAQYISEAFDIPQISTGDMLRAAVKAQSELGMAAKKVMDEGGLVPDDIIIGLVKERIEEDDCANGCLFDGFPRTIAQADALRTEGIRIDNIIEIDVPDEEIIKRMSGRRVHPASGRTYHIVFNPPAVEGKDDVTGEDLVQRDDDTEETVRKRLKVYHDQTEPLVGYYRNLAIEGSDDAPKYSCINGIGQVEQIKQDIIAALKQ</sequence>
<proteinExistence type="inferred from homology"/>
<accession>B3QNN0</accession>
<evidence type="ECO:0000255" key="1">
    <source>
        <dbReference type="HAMAP-Rule" id="MF_00235"/>
    </source>
</evidence>
<feature type="chain" id="PRO_1000100543" description="Adenylate kinase">
    <location>
        <begin position="1"/>
        <end position="218"/>
    </location>
</feature>
<feature type="region of interest" description="NMP" evidence="1">
    <location>
        <begin position="30"/>
        <end position="59"/>
    </location>
</feature>
<feature type="region of interest" description="LID" evidence="1">
    <location>
        <begin position="122"/>
        <end position="159"/>
    </location>
</feature>
<feature type="binding site" evidence="1">
    <location>
        <begin position="10"/>
        <end position="15"/>
    </location>
    <ligand>
        <name>ATP</name>
        <dbReference type="ChEBI" id="CHEBI:30616"/>
    </ligand>
</feature>
<feature type="binding site" evidence="1">
    <location>
        <position position="31"/>
    </location>
    <ligand>
        <name>AMP</name>
        <dbReference type="ChEBI" id="CHEBI:456215"/>
    </ligand>
</feature>
<feature type="binding site" evidence="1">
    <location>
        <position position="36"/>
    </location>
    <ligand>
        <name>AMP</name>
        <dbReference type="ChEBI" id="CHEBI:456215"/>
    </ligand>
</feature>
<feature type="binding site" evidence="1">
    <location>
        <begin position="57"/>
        <end position="59"/>
    </location>
    <ligand>
        <name>AMP</name>
        <dbReference type="ChEBI" id="CHEBI:456215"/>
    </ligand>
</feature>
<feature type="binding site" evidence="1">
    <location>
        <begin position="85"/>
        <end position="88"/>
    </location>
    <ligand>
        <name>AMP</name>
        <dbReference type="ChEBI" id="CHEBI:456215"/>
    </ligand>
</feature>
<feature type="binding site" evidence="1">
    <location>
        <position position="92"/>
    </location>
    <ligand>
        <name>AMP</name>
        <dbReference type="ChEBI" id="CHEBI:456215"/>
    </ligand>
</feature>
<feature type="binding site" evidence="1">
    <location>
        <position position="123"/>
    </location>
    <ligand>
        <name>ATP</name>
        <dbReference type="ChEBI" id="CHEBI:30616"/>
    </ligand>
</feature>
<feature type="binding site" evidence="1">
    <location>
        <begin position="132"/>
        <end position="133"/>
    </location>
    <ligand>
        <name>ATP</name>
        <dbReference type="ChEBI" id="CHEBI:30616"/>
    </ligand>
</feature>
<feature type="binding site" evidence="1">
    <location>
        <position position="156"/>
    </location>
    <ligand>
        <name>AMP</name>
        <dbReference type="ChEBI" id="CHEBI:456215"/>
    </ligand>
</feature>
<feature type="binding site" evidence="1">
    <location>
        <position position="167"/>
    </location>
    <ligand>
        <name>AMP</name>
        <dbReference type="ChEBI" id="CHEBI:456215"/>
    </ligand>
</feature>
<feature type="binding site" evidence="1">
    <location>
        <position position="203"/>
    </location>
    <ligand>
        <name>ATP</name>
        <dbReference type="ChEBI" id="CHEBI:30616"/>
    </ligand>
</feature>